<protein>
    <recommendedName>
        <fullName evidence="2">Multidrug resistance protein MdtC</fullName>
    </recommendedName>
    <alternativeName>
        <fullName evidence="2">Multidrug transporter MdtC</fullName>
    </alternativeName>
</protein>
<keyword id="KW-0997">Cell inner membrane</keyword>
<keyword id="KW-1003">Cell membrane</keyword>
<keyword id="KW-0472">Membrane</keyword>
<keyword id="KW-1185">Reference proteome</keyword>
<keyword id="KW-0812">Transmembrane</keyword>
<keyword id="KW-1133">Transmembrane helix</keyword>
<keyword id="KW-0813">Transport</keyword>
<comment type="function">
    <text evidence="2 3 4">The MdtABC tripartite complex confers resistance against novobiocin and deoxycholate. MdtABC requires TolC for its function.</text>
</comment>
<comment type="subunit">
    <text>Part of a tripartite efflux system composed of MdtA, MdtB and MdtC. MdtC forms a heteromultimer with MdtB.</text>
</comment>
<comment type="interaction">
    <interactant intactId="EBI-1116694">
        <id>P76399</id>
    </interactant>
    <interactant intactId="EBI-561416">
        <id>P76398</id>
        <label>mdtB</label>
    </interactant>
    <organismsDiffer>false</organismsDiffer>
    <experiments>4</experiments>
</comment>
<comment type="subcellular location">
    <subcellularLocation>
        <location>Cell inner membrane</location>
        <topology>Multi-pass membrane protein</topology>
    </subcellularLocation>
</comment>
<comment type="induction">
    <text evidence="2 3 4">The mdtABC operon is transcriptionally activated by BaeR.</text>
</comment>
<comment type="similarity">
    <text evidence="2">Belongs to the resistance-nodulation-cell division (RND) (TC 2.A.6) family. MdtC subfamily.</text>
</comment>
<proteinExistence type="evidence at protein level"/>
<sequence>MKFFALFIYRPVATILLSVAITLCGILGFRMLPVAPLPQVDFPVIIVSASLPGASPETMASSVATPLERSLGRIAGVSEMTSSSSLGSTRIILQFDFDRDINGAARDVQAAINAAQSLLPSGMPSRPTYRKANPSDAPIMILTLTSDTYSQGELYDFASTQLAPTISQIDGVGDVDVGGSSLPAVRVGLNPQALFNQGVSLDDVRTAVSNANVRKPQGALEDGTHRWQIQTNDELKTAAEYQPLIIHYNNGGAVRLGDVATVTDSVQDVRNAGMTNAKPAILLMIRKLPEANIIQTVDSIRAKLPELQETIPAAIDLQIAQDRSPTIRASLEEVEQTLIISVALVILVVFLFLRSGRATIIPAVSVPVSLIGTFAAMYLCGFSLNNLSLMALTIATGFVVDDAIVVLENIARHLEAGMKPLQAALQGTREVGFTVLSMSLSLVAVFLPLLLMGGLPGRLLREFAVTLSVAIGISLLVSLTLTPMMCGWMLKASKPREQKRLRGFGRMLVALQQGYGKSLKWVLNHTRLVGVVLLGTIALNIWLYISIPKTFFPEQDTGVLMGGIQADQSISFQAMRGKLQDFMKIIRDDPAVDNVTGFTGGSRVNSGMMFITLKPRDERSETAQQIIDRLRVKLAKEPGANLFLMAVQDIRVGGRQSNASYQYTLLSDDLAALREWEPKIRKKLATLPELADVNSDQQDNGAEMNLVYDRDTMARLGIDVQAANSLLNNAFGQRQISTIYQPMNQYKVVMEVDPRYTQDISALEKMFVINNEGKAIPLSYFAKWQPANAPLSVNHQGLSAASTISFNLPTGKSLSDASAAIDRAMTQLGVPSTVRGSFAGTAQVFQETMNSQVILIIAAIATVYIVLGILYESYVHPLTILSTLPSAGVGALLALELFNAPFSLIALIGIMLLIGIVKKNAIMMVDFALEAQRHGNLTPQEAIFQACLLRFRPIMMTTLAALFGALPLVLSGGDGSELRQPLGITIVGGLVMSQLLTLYTTPVVYLFFDRLRLRFSRKPKQTVTE</sequence>
<evidence type="ECO:0000255" key="1"/>
<evidence type="ECO:0000255" key="2">
    <source>
        <dbReference type="HAMAP-Rule" id="MF_01424"/>
    </source>
</evidence>
<evidence type="ECO:0000269" key="3">
    <source>
    </source>
</evidence>
<evidence type="ECO:0000269" key="4">
    <source>
    </source>
</evidence>
<accession>P76399</accession>
<accession>O08006</accession>
<name>MDTC_ECOLI</name>
<organism>
    <name type="scientific">Escherichia coli (strain K12)</name>
    <dbReference type="NCBI Taxonomy" id="83333"/>
    <lineage>
        <taxon>Bacteria</taxon>
        <taxon>Pseudomonadati</taxon>
        <taxon>Pseudomonadota</taxon>
        <taxon>Gammaproteobacteria</taxon>
        <taxon>Enterobacterales</taxon>
        <taxon>Enterobacteriaceae</taxon>
        <taxon>Escherichia</taxon>
    </lineage>
</organism>
<dbReference type="EMBL" id="AB089189">
    <property type="protein sequence ID" value="BAC06609.1"/>
    <property type="molecule type" value="Genomic_DNA"/>
</dbReference>
<dbReference type="EMBL" id="U00096">
    <property type="protein sequence ID" value="AAC75137.1"/>
    <property type="molecule type" value="Genomic_DNA"/>
</dbReference>
<dbReference type="EMBL" id="AP009048">
    <property type="protein sequence ID" value="BAA15932.1"/>
    <property type="molecule type" value="Genomic_DNA"/>
</dbReference>
<dbReference type="PIR" id="C64974">
    <property type="entry name" value="C64974"/>
</dbReference>
<dbReference type="RefSeq" id="NP_416580.1">
    <property type="nucleotide sequence ID" value="NC_000913.3"/>
</dbReference>
<dbReference type="RefSeq" id="WP_000667481.1">
    <property type="nucleotide sequence ID" value="NZ_LN832404.1"/>
</dbReference>
<dbReference type="SMR" id="P76399"/>
<dbReference type="BioGRID" id="4260422">
    <property type="interactions" value="180"/>
</dbReference>
<dbReference type="ComplexPortal" id="CPX-2119">
    <property type="entry name" value="MdtABC-TolC multidrug efflux transport complex"/>
</dbReference>
<dbReference type="FunCoup" id="P76399">
    <property type="interactions" value="697"/>
</dbReference>
<dbReference type="IntAct" id="P76399">
    <property type="interactions" value="4"/>
</dbReference>
<dbReference type="STRING" id="511145.b2076"/>
<dbReference type="CARD" id="ARO:3000794">
    <property type="molecule name" value="mdtC"/>
    <property type="mechanism identifier" value="ARO:0010000"/>
    <property type="mechanism name" value="antibiotic efflux"/>
</dbReference>
<dbReference type="TCDB" id="2.A.6.2.12">
    <property type="family name" value="the resistance-nodulation-cell division (rnd) superfamily"/>
</dbReference>
<dbReference type="PaxDb" id="511145-b2076"/>
<dbReference type="EnsemblBacteria" id="AAC75137">
    <property type="protein sequence ID" value="AAC75137"/>
    <property type="gene ID" value="b2076"/>
</dbReference>
<dbReference type="GeneID" id="946608"/>
<dbReference type="KEGG" id="ecj:JW2061"/>
<dbReference type="KEGG" id="eco:b2076"/>
<dbReference type="KEGG" id="ecoc:C3026_11675"/>
<dbReference type="PATRIC" id="fig|1411691.4.peg.174"/>
<dbReference type="EchoBASE" id="EB3811"/>
<dbReference type="eggNOG" id="COG0841">
    <property type="taxonomic scope" value="Bacteria"/>
</dbReference>
<dbReference type="HOGENOM" id="CLU_002755_1_2_6"/>
<dbReference type="InParanoid" id="P76399"/>
<dbReference type="OMA" id="LEPFIIM"/>
<dbReference type="OrthoDB" id="9757904at2"/>
<dbReference type="PhylomeDB" id="P76399"/>
<dbReference type="BioCyc" id="EcoCyc:B2076-MONOMER"/>
<dbReference type="BioCyc" id="MetaCyc:B2076-MONOMER"/>
<dbReference type="PRO" id="PR:P76399"/>
<dbReference type="Proteomes" id="UP000000625">
    <property type="component" value="Chromosome"/>
</dbReference>
<dbReference type="GO" id="GO:1990281">
    <property type="term" value="C:efflux pump complex"/>
    <property type="evidence" value="ECO:0000314"/>
    <property type="project" value="EcoCyc"/>
</dbReference>
<dbReference type="GO" id="GO:0098567">
    <property type="term" value="C:periplasmic side of plasma membrane"/>
    <property type="evidence" value="ECO:0000303"/>
    <property type="project" value="ComplexPortal"/>
</dbReference>
<dbReference type="GO" id="GO:0005886">
    <property type="term" value="C:plasma membrane"/>
    <property type="evidence" value="ECO:0000314"/>
    <property type="project" value="EcoCyc"/>
</dbReference>
<dbReference type="GO" id="GO:0015125">
    <property type="term" value="F:bile acid transmembrane transporter activity"/>
    <property type="evidence" value="ECO:0000315"/>
    <property type="project" value="EcoCyc"/>
</dbReference>
<dbReference type="GO" id="GO:0042910">
    <property type="term" value="F:xenobiotic transmembrane transporter activity"/>
    <property type="evidence" value="ECO:0000318"/>
    <property type="project" value="GO_Central"/>
</dbReference>
<dbReference type="GO" id="GO:0015721">
    <property type="term" value="P:bile acid and bile salt transport"/>
    <property type="evidence" value="ECO:0000315"/>
    <property type="project" value="EcoCyc"/>
</dbReference>
<dbReference type="GO" id="GO:0140330">
    <property type="term" value="P:xenobiotic detoxification by transmembrane export across the cell outer membrane"/>
    <property type="evidence" value="ECO:0000303"/>
    <property type="project" value="ComplexPortal"/>
</dbReference>
<dbReference type="GO" id="GO:0042908">
    <property type="term" value="P:xenobiotic transport"/>
    <property type="evidence" value="ECO:0000315"/>
    <property type="project" value="EcoCyc"/>
</dbReference>
<dbReference type="FunFam" id="1.20.1640.10:FF:000001">
    <property type="entry name" value="Efflux pump membrane transporter"/>
    <property type="match status" value="1"/>
</dbReference>
<dbReference type="FunFam" id="3.30.70.1430:FF:000001">
    <property type="entry name" value="Efflux pump membrane transporter"/>
    <property type="match status" value="1"/>
</dbReference>
<dbReference type="FunFam" id="3.30.2090.10:FF:000004">
    <property type="entry name" value="Multidrug resistance protein MdtC"/>
    <property type="match status" value="1"/>
</dbReference>
<dbReference type="FunFam" id="3.30.2090.10:FF:000005">
    <property type="entry name" value="Multidrug resistance protein MdtC"/>
    <property type="match status" value="1"/>
</dbReference>
<dbReference type="FunFam" id="3.30.70.1430:FF:000004">
    <property type="entry name" value="Multidrug resistance protein MdtC"/>
    <property type="match status" value="1"/>
</dbReference>
<dbReference type="Gene3D" id="3.30.70.1430">
    <property type="entry name" value="Multidrug efflux transporter AcrB pore domain"/>
    <property type="match status" value="2"/>
</dbReference>
<dbReference type="Gene3D" id="3.30.70.1440">
    <property type="entry name" value="Multidrug efflux transporter AcrB pore domain"/>
    <property type="match status" value="1"/>
</dbReference>
<dbReference type="Gene3D" id="3.30.70.1320">
    <property type="entry name" value="Multidrug efflux transporter AcrB pore domain like"/>
    <property type="match status" value="1"/>
</dbReference>
<dbReference type="Gene3D" id="3.30.2090.10">
    <property type="entry name" value="Multidrug efflux transporter AcrB TolC docking domain, DN and DC subdomains"/>
    <property type="match status" value="2"/>
</dbReference>
<dbReference type="Gene3D" id="1.20.1640.10">
    <property type="entry name" value="Multidrug efflux transporter AcrB transmembrane domain"/>
    <property type="match status" value="2"/>
</dbReference>
<dbReference type="HAMAP" id="MF_01424">
    <property type="entry name" value="MdtC"/>
    <property type="match status" value="1"/>
</dbReference>
<dbReference type="InterPro" id="IPR027463">
    <property type="entry name" value="AcrB_DN_DC_subdom"/>
</dbReference>
<dbReference type="InterPro" id="IPR001036">
    <property type="entry name" value="Acrflvin-R"/>
</dbReference>
<dbReference type="InterPro" id="IPR023931">
    <property type="entry name" value="Multidrug-R_MdtC"/>
</dbReference>
<dbReference type="NCBIfam" id="NF007905">
    <property type="entry name" value="PRK10614.1"/>
    <property type="match status" value="1"/>
</dbReference>
<dbReference type="NCBIfam" id="NF033617">
    <property type="entry name" value="RND_permease_2"/>
    <property type="match status" value="1"/>
</dbReference>
<dbReference type="PANTHER" id="PTHR32063">
    <property type="match status" value="1"/>
</dbReference>
<dbReference type="PANTHER" id="PTHR32063:SF34">
    <property type="entry name" value="MULTIDRUG RESISTANCE PROTEIN MDTC"/>
    <property type="match status" value="1"/>
</dbReference>
<dbReference type="Pfam" id="PF00873">
    <property type="entry name" value="ACR_tran"/>
    <property type="match status" value="1"/>
</dbReference>
<dbReference type="PRINTS" id="PR00702">
    <property type="entry name" value="ACRIFLAVINRP"/>
</dbReference>
<dbReference type="SUPFAM" id="SSF82693">
    <property type="entry name" value="Multidrug efflux transporter AcrB pore domain, PN1, PN2, PC1 and PC2 subdomains"/>
    <property type="match status" value="4"/>
</dbReference>
<dbReference type="SUPFAM" id="SSF82714">
    <property type="entry name" value="Multidrug efflux transporter AcrB TolC docking domain, DN and DC subdomains"/>
    <property type="match status" value="2"/>
</dbReference>
<dbReference type="SUPFAM" id="SSF82866">
    <property type="entry name" value="Multidrug efflux transporter AcrB transmembrane domain"/>
    <property type="match status" value="2"/>
</dbReference>
<feature type="chain" id="PRO_0000161831" description="Multidrug resistance protein MdtC">
    <location>
        <begin position="1"/>
        <end position="1025"/>
    </location>
</feature>
<feature type="topological domain" description="Cytoplasmic" evidence="1">
    <location>
        <begin position="1"/>
        <end position="6"/>
    </location>
</feature>
<feature type="transmembrane region" description="Helical" evidence="2">
    <location>
        <begin position="7"/>
        <end position="29"/>
    </location>
</feature>
<feature type="topological domain" description="Periplasmic" evidence="1">
    <location>
        <begin position="30"/>
        <end position="335"/>
    </location>
</feature>
<feature type="transmembrane region" description="Helical" evidence="2">
    <location>
        <begin position="336"/>
        <end position="353"/>
    </location>
</feature>
<feature type="topological domain" description="Cytoplasmic" evidence="1">
    <location>
        <begin position="354"/>
        <end position="359"/>
    </location>
</feature>
<feature type="transmembrane region" description="Helical" evidence="2">
    <location>
        <begin position="360"/>
        <end position="379"/>
    </location>
</feature>
<feature type="topological domain" description="Periplasmic" evidence="1">
    <location>
        <begin position="380"/>
        <end position="388"/>
    </location>
</feature>
<feature type="transmembrane region" description="Helical" evidence="2">
    <location>
        <begin position="389"/>
        <end position="411"/>
    </location>
</feature>
<feature type="topological domain" description="Cytoplasmic" evidence="1">
    <location>
        <begin position="412"/>
        <end position="430"/>
    </location>
</feature>
<feature type="transmembrane region" description="Helical" evidence="2">
    <location>
        <begin position="431"/>
        <end position="453"/>
    </location>
</feature>
<feature type="topological domain" description="Periplasmic" evidence="1">
    <location>
        <begin position="454"/>
        <end position="467"/>
    </location>
</feature>
<feature type="transmembrane region" description="Helical" evidence="2">
    <location>
        <begin position="468"/>
        <end position="490"/>
    </location>
</feature>
<feature type="topological domain" description="Cytoplasmic" evidence="1">
    <location>
        <begin position="491"/>
        <end position="852"/>
    </location>
</feature>
<feature type="transmembrane region" description="Helical" evidence="2">
    <location>
        <begin position="853"/>
        <end position="875"/>
    </location>
</feature>
<feature type="topological domain" description="Periplasmic" evidence="1">
    <location>
        <begin position="876"/>
        <end position="894"/>
    </location>
</feature>
<feature type="transmembrane region" description="Helical" evidence="2">
    <location>
        <begin position="895"/>
        <end position="917"/>
    </location>
</feature>
<feature type="topological domain" description="Cytoplasmic" evidence="1">
    <location>
        <begin position="918"/>
        <end position="947"/>
    </location>
</feature>
<feature type="transmembrane region" description="Helical" evidence="2">
    <location>
        <begin position="948"/>
        <end position="970"/>
    </location>
</feature>
<feature type="topological domain" description="Periplasmic" evidence="1">
    <location>
        <begin position="971"/>
        <end position="984"/>
    </location>
</feature>
<feature type="transmembrane region" description="Helical" evidence="2">
    <location>
        <begin position="985"/>
        <end position="1007"/>
    </location>
</feature>
<feature type="topological domain" description="Cytoplasmic" evidence="1">
    <location>
        <begin position="1008"/>
        <end position="1025"/>
    </location>
</feature>
<reference key="1">
    <citation type="journal article" date="2002" name="J. Bacteriol.">
        <title>The putative response regulator BaeR stimulates multidrug resistance of Escherichia coli via a novel multidrug exporter system, MdtABC.</title>
        <authorList>
            <person name="Nagakubo S."/>
            <person name="Nishino K."/>
            <person name="Hirata T."/>
            <person name="Yamaguchi A."/>
        </authorList>
    </citation>
    <scope>NUCLEOTIDE SEQUENCE [GENOMIC DNA]</scope>
    <scope>FUNCTION</scope>
    <scope>INDUCTION</scope>
    <source>
        <strain>K12</strain>
    </source>
</reference>
<reference key="2">
    <citation type="journal article" date="1996" name="DNA Res.">
        <title>A 460-kb DNA sequence of the Escherichia coli K-12 genome corresponding to the 40.1-50.0 min region on the linkage map.</title>
        <authorList>
            <person name="Itoh T."/>
            <person name="Aiba H."/>
            <person name="Baba T."/>
            <person name="Fujita K."/>
            <person name="Hayashi K."/>
            <person name="Inada T."/>
            <person name="Isono K."/>
            <person name="Kasai H."/>
            <person name="Kimura S."/>
            <person name="Kitakawa M."/>
            <person name="Kitagawa M."/>
            <person name="Makino K."/>
            <person name="Miki T."/>
            <person name="Mizobuchi K."/>
            <person name="Mori H."/>
            <person name="Mori T."/>
            <person name="Motomura K."/>
            <person name="Nakade S."/>
            <person name="Nakamura Y."/>
            <person name="Nashimoto H."/>
            <person name="Nishio Y."/>
            <person name="Oshima T."/>
            <person name="Saito N."/>
            <person name="Sampei G."/>
            <person name="Seki Y."/>
            <person name="Sivasundaram S."/>
            <person name="Tagami H."/>
            <person name="Takeda J."/>
            <person name="Takemoto K."/>
            <person name="Wada C."/>
            <person name="Yamamoto Y."/>
            <person name="Horiuchi T."/>
        </authorList>
    </citation>
    <scope>NUCLEOTIDE SEQUENCE [LARGE SCALE GENOMIC DNA]</scope>
    <source>
        <strain>K12 / W3110 / ATCC 27325 / DSM 5911</strain>
    </source>
</reference>
<reference key="3">
    <citation type="journal article" date="1997" name="Science">
        <title>The complete genome sequence of Escherichia coli K-12.</title>
        <authorList>
            <person name="Blattner F.R."/>
            <person name="Plunkett G. III"/>
            <person name="Bloch C.A."/>
            <person name="Perna N.T."/>
            <person name="Burland V."/>
            <person name="Riley M."/>
            <person name="Collado-Vides J."/>
            <person name="Glasner J.D."/>
            <person name="Rode C.K."/>
            <person name="Mayhew G.F."/>
            <person name="Gregor J."/>
            <person name="Davis N.W."/>
            <person name="Kirkpatrick H.A."/>
            <person name="Goeden M.A."/>
            <person name="Rose D.J."/>
            <person name="Mau B."/>
            <person name="Shao Y."/>
        </authorList>
    </citation>
    <scope>NUCLEOTIDE SEQUENCE [LARGE SCALE GENOMIC DNA]</scope>
    <source>
        <strain>K12 / MG1655 / ATCC 47076</strain>
    </source>
</reference>
<reference key="4">
    <citation type="journal article" date="2006" name="Mol. Syst. Biol.">
        <title>Highly accurate genome sequences of Escherichia coli K-12 strains MG1655 and W3110.</title>
        <authorList>
            <person name="Hayashi K."/>
            <person name="Morooka N."/>
            <person name="Yamamoto Y."/>
            <person name="Fujita K."/>
            <person name="Isono K."/>
            <person name="Choi S."/>
            <person name="Ohtsubo E."/>
            <person name="Baba T."/>
            <person name="Wanner B.L."/>
            <person name="Mori H."/>
            <person name="Horiuchi T."/>
        </authorList>
    </citation>
    <scope>NUCLEOTIDE SEQUENCE [LARGE SCALE GENOMIC DNA]</scope>
    <source>
        <strain>K12 / W3110 / ATCC 27325 / DSM 5911</strain>
    </source>
</reference>
<reference key="5">
    <citation type="journal article" date="2002" name="J. Bacteriol.">
        <title>The baeSR two-component regulatory system activates transcription of the yegMNOB (mdtABCD) transporter gene cluster in Escherichia coli and increases its resistance to novobiocin and deoxycholate.</title>
        <authorList>
            <person name="Baranova N."/>
            <person name="Nikaido H."/>
        </authorList>
    </citation>
    <scope>FUNCTION</scope>
    <scope>INDUCTION</scope>
</reference>
<reference key="6">
    <citation type="journal article" date="2005" name="Science">
        <title>Global topology analysis of the Escherichia coli inner membrane proteome.</title>
        <authorList>
            <person name="Daley D.O."/>
            <person name="Rapp M."/>
            <person name="Granseth E."/>
            <person name="Melen K."/>
            <person name="Drew D."/>
            <person name="von Heijne G."/>
        </authorList>
    </citation>
    <scope>TOPOLOGY [LARGE SCALE ANALYSIS]</scope>
    <source>
        <strain>K12 / MG1655 / ATCC 47076</strain>
    </source>
</reference>
<gene>
    <name evidence="2" type="primary">mdtC</name>
    <name type="synonym">yegO</name>
    <name type="ordered locus">b2076</name>
    <name type="ordered locus">JW2061</name>
</gene>